<name>PTPA_STAAM</name>
<feature type="chain" id="PRO_0000300661" description="Low molecular weight protein-tyrosine-phosphatase PtpA">
    <location>
        <begin position="1"/>
        <end position="154"/>
    </location>
</feature>
<feature type="active site" description="Nucleophile" evidence="2">
    <location>
        <position position="8"/>
    </location>
</feature>
<feature type="active site" evidence="2">
    <location>
        <position position="14"/>
    </location>
</feature>
<feature type="active site" description="Proton donor" evidence="2">
    <location>
        <position position="120"/>
    </location>
</feature>
<protein>
    <recommendedName>
        <fullName>Low molecular weight protein-tyrosine-phosphatase PtpA</fullName>
        <ecNumber>3.1.3.48</ecNumber>
    </recommendedName>
    <alternativeName>
        <fullName>Phosphotyrosine phosphatase A</fullName>
        <shortName>PTPase A</shortName>
    </alternativeName>
</protein>
<comment type="function">
    <text evidence="1">Secreted tyrosine phosphatase that plays a critical role during infection as a bacterial effector protein that counteracts host defenses. Required for intramacrophage survival.</text>
</comment>
<comment type="catalytic activity">
    <reaction evidence="1">
        <text>O-phospho-L-tyrosyl-[protein] + H2O = L-tyrosyl-[protein] + phosphate</text>
        <dbReference type="Rhea" id="RHEA:10684"/>
        <dbReference type="Rhea" id="RHEA-COMP:10136"/>
        <dbReference type="Rhea" id="RHEA-COMP:20101"/>
        <dbReference type="ChEBI" id="CHEBI:15377"/>
        <dbReference type="ChEBI" id="CHEBI:43474"/>
        <dbReference type="ChEBI" id="CHEBI:46858"/>
        <dbReference type="ChEBI" id="CHEBI:61978"/>
        <dbReference type="EC" id="3.1.3.48"/>
    </reaction>
</comment>
<comment type="subunit">
    <text evidence="1">Interacts with host CORO1A.</text>
</comment>
<comment type="subcellular location">
    <subcellularLocation>
        <location evidence="1">Secreted</location>
    </subcellularLocation>
    <text evidence="1">Secreted intracellularly upon bacterial infection of macrophages.</text>
</comment>
<comment type="PTM">
    <text evidence="1">Phosphorylations at Tyr-122 and Tyr-123 are essential for phosphatase activity.</text>
</comment>
<comment type="similarity">
    <text evidence="3">Belongs to the low molecular weight phosphotyrosine protein phosphatase family.</text>
</comment>
<sequence length="154" mass="17491">MVDVAFVCLGNICRSPMAEAIMRQRLKDRNIHDIKVHSRGTGSWNLGEPPHEGTQKILNKHNIPFDGMISELFEATDDFDYIVAMDQSNVDNIKSINPNLKGQLFKLLEFSNMEESDVPDPYYTNNFEGVYDMVLSSCDNLIDYIVKDANLKEG</sequence>
<dbReference type="EC" id="3.1.3.48"/>
<dbReference type="EMBL" id="BA000017">
    <property type="protein sequence ID" value="BAB58043.1"/>
    <property type="molecule type" value="Genomic_DNA"/>
</dbReference>
<dbReference type="RefSeq" id="WP_000228666.1">
    <property type="nucleotide sequence ID" value="NC_002758.2"/>
</dbReference>
<dbReference type="SMR" id="Q99T00"/>
<dbReference type="KEGG" id="sav:SAV1881"/>
<dbReference type="HOGENOM" id="CLU_071415_2_3_9"/>
<dbReference type="PhylomeDB" id="Q99T00"/>
<dbReference type="Proteomes" id="UP000002481">
    <property type="component" value="Chromosome"/>
</dbReference>
<dbReference type="GO" id="GO:0005576">
    <property type="term" value="C:extracellular region"/>
    <property type="evidence" value="ECO:0007669"/>
    <property type="project" value="UniProtKB-SubCell"/>
</dbReference>
<dbReference type="GO" id="GO:0004725">
    <property type="term" value="F:protein tyrosine phosphatase activity"/>
    <property type="evidence" value="ECO:0007669"/>
    <property type="project" value="UniProtKB-EC"/>
</dbReference>
<dbReference type="CDD" id="cd16343">
    <property type="entry name" value="LMWPTP"/>
    <property type="match status" value="1"/>
</dbReference>
<dbReference type="FunFam" id="3.40.50.2300:FF:000268">
    <property type="entry name" value="Low molecular weight protein-tyrosine-phosphatase PtpA"/>
    <property type="match status" value="1"/>
</dbReference>
<dbReference type="Gene3D" id="3.40.50.2300">
    <property type="match status" value="1"/>
</dbReference>
<dbReference type="InterPro" id="IPR050438">
    <property type="entry name" value="LMW_PTPase"/>
</dbReference>
<dbReference type="InterPro" id="IPR023485">
    <property type="entry name" value="Ptyr_pPase"/>
</dbReference>
<dbReference type="InterPro" id="IPR036196">
    <property type="entry name" value="Ptyr_pPase_sf"/>
</dbReference>
<dbReference type="InterPro" id="IPR017867">
    <property type="entry name" value="Tyr_phospatase_low_mol_wt"/>
</dbReference>
<dbReference type="PANTHER" id="PTHR11717:SF7">
    <property type="entry name" value="LOW MOLECULAR WEIGHT PHOSPHOTYROSINE PROTEIN PHOSPHATASE"/>
    <property type="match status" value="1"/>
</dbReference>
<dbReference type="PANTHER" id="PTHR11717">
    <property type="entry name" value="LOW MOLECULAR WEIGHT PROTEIN TYROSINE PHOSPHATASE"/>
    <property type="match status" value="1"/>
</dbReference>
<dbReference type="Pfam" id="PF01451">
    <property type="entry name" value="LMWPc"/>
    <property type="match status" value="1"/>
</dbReference>
<dbReference type="PRINTS" id="PR00719">
    <property type="entry name" value="LMWPTPASE"/>
</dbReference>
<dbReference type="SMART" id="SM00226">
    <property type="entry name" value="LMWPc"/>
    <property type="match status" value="1"/>
</dbReference>
<dbReference type="SUPFAM" id="SSF52788">
    <property type="entry name" value="Phosphotyrosine protein phosphatases I"/>
    <property type="match status" value="1"/>
</dbReference>
<accession>Q99T00</accession>
<evidence type="ECO:0000250" key="1">
    <source>
        <dbReference type="UniProtKB" id="A0A0H3K9F2"/>
    </source>
</evidence>
<evidence type="ECO:0000250" key="2">
    <source>
        <dbReference type="UniProtKB" id="P11064"/>
    </source>
</evidence>
<evidence type="ECO:0000305" key="3"/>
<gene>
    <name type="primary">ptpA</name>
    <name type="ordered locus">SAV1881</name>
</gene>
<organism>
    <name type="scientific">Staphylococcus aureus (strain Mu50 / ATCC 700699)</name>
    <dbReference type="NCBI Taxonomy" id="158878"/>
    <lineage>
        <taxon>Bacteria</taxon>
        <taxon>Bacillati</taxon>
        <taxon>Bacillota</taxon>
        <taxon>Bacilli</taxon>
        <taxon>Bacillales</taxon>
        <taxon>Staphylococcaceae</taxon>
        <taxon>Staphylococcus</taxon>
    </lineage>
</organism>
<proteinExistence type="inferred from homology"/>
<keyword id="KW-0378">Hydrolase</keyword>
<keyword id="KW-0597">Phosphoprotein</keyword>
<keyword id="KW-0904">Protein phosphatase</keyword>
<keyword id="KW-0964">Secreted</keyword>
<reference key="1">
    <citation type="journal article" date="2001" name="Lancet">
        <title>Whole genome sequencing of meticillin-resistant Staphylococcus aureus.</title>
        <authorList>
            <person name="Kuroda M."/>
            <person name="Ohta T."/>
            <person name="Uchiyama I."/>
            <person name="Baba T."/>
            <person name="Yuzawa H."/>
            <person name="Kobayashi I."/>
            <person name="Cui L."/>
            <person name="Oguchi A."/>
            <person name="Aoki K."/>
            <person name="Nagai Y."/>
            <person name="Lian J.-Q."/>
            <person name="Ito T."/>
            <person name="Kanamori M."/>
            <person name="Matsumaru H."/>
            <person name="Maruyama A."/>
            <person name="Murakami H."/>
            <person name="Hosoyama A."/>
            <person name="Mizutani-Ui Y."/>
            <person name="Takahashi N.K."/>
            <person name="Sawano T."/>
            <person name="Inoue R."/>
            <person name="Kaito C."/>
            <person name="Sekimizu K."/>
            <person name="Hirakawa H."/>
            <person name="Kuhara S."/>
            <person name="Goto S."/>
            <person name="Yabuzaki J."/>
            <person name="Kanehisa M."/>
            <person name="Yamashita A."/>
            <person name="Oshima K."/>
            <person name="Furuya K."/>
            <person name="Yoshino C."/>
            <person name="Shiba T."/>
            <person name="Hattori M."/>
            <person name="Ogasawara N."/>
            <person name="Hayashi H."/>
            <person name="Hiramatsu K."/>
        </authorList>
    </citation>
    <scope>NUCLEOTIDE SEQUENCE [LARGE SCALE GENOMIC DNA]</scope>
    <source>
        <strain>Mu50 / ATCC 700699</strain>
    </source>
</reference>